<comment type="function">
    <text evidence="7 10">Adapter protein that links activated FGR and NGF receptors to downstream signaling pathways. Plays an important role in the activation of MAP kinases and in the phosphorylation of PIK3R1, the regulatory subunit of phosphatidylinositol 3-kinase, in response to ligand-mediated activation of FGFR1. Modulates signaling via SHC1 by competing for a common binding site on NTRK1.</text>
</comment>
<comment type="subunit">
    <text evidence="1 5 6 7 8 9 10 11">Part of a complex containing FRS2, GRB2, GAB1, PIK3R1 and SOS1. Part of a complex containing GRB2 and CBL. Identified in a complex containing FGFR4, NCAM1, CDH2, PLCG1, FRS2, SRC, SHC1, GAP43 and CTTN. Binds RET (By similarity). Binds ALK, FGFR1, CKS2, MAPK1/ERK2, MAPK3/ERK1 and SRC. The tyrosine-phosphorylated protein binds the SH2 domains of GRB2 and PTPN11. Interacts with NTRK1, NTRK2 and NTRK3 (phosphorylated upon ligand-binding).</text>
</comment>
<comment type="interaction">
    <interactant intactId="EBI-1104330">
        <id>Q8WU20</id>
    </interactant>
    <interactant intactId="EBI-1028277">
        <id>P11362</id>
        <label>FGFR1</label>
    </interactant>
    <organismsDiffer>false</organismsDiffer>
    <experiments>3</experiments>
</comment>
<comment type="interaction">
    <interactant intactId="EBI-1104330">
        <id>Q8WU20</id>
    </interactant>
    <interactant intactId="EBI-297779">
        <id>Q06124</id>
        <label>PTPN11</label>
    </interactant>
    <organismsDiffer>false</organismsDiffer>
    <experiments>4</experiments>
</comment>
<comment type="subcellular location">
    <subcellularLocation>
        <location>Endomembrane system</location>
    </subcellularLocation>
    <text>Cytoplasmic, membrane-bound.</text>
</comment>
<comment type="tissue specificity">
    <text evidence="5">Highly expressed in heart, brain, spleen, lung, liver, skeletal muscle, kidney and testis.</text>
</comment>
<comment type="PTM">
    <text evidence="1 5 7 9 10 11">Phosphorylated by ULK2 in vitro (By similarity). Phosphorylated on tyrosine residues upon stimulation by NGF or FGF2. Phosphorylated on tyrosine residues by activated ALK and FGFR1. Phosphorylated on tyrosine residues upon activation of FGFR2 and FGFR3. Phosphorylated on threonine residues by MAP kinases; this inhibits tyrosine phosphorylation, and thereby down-regulates FRS2-mediated activation of MAP kinases.</text>
</comment>
<comment type="PTM">
    <text evidence="1">Ubiquitinated when tyrosine phosphorylated and in a complex with GRB2. The unphosphorylated form is not subject to ubiquitination (By similarity).</text>
</comment>
<comment type="sequence caution" evidence="12">
    <conflict type="erroneous termination">
        <sequence resource="EMBL-CDS" id="AAH21562"/>
    </conflict>
    <text>Extended C-terminus.</text>
</comment>
<comment type="sequence caution" evidence="12">
    <conflict type="erroneous termination">
        <sequence resource="EMBL-CDS" id="BAG35381"/>
    </conflict>
    <text>Extended C-terminus.</text>
</comment>
<reference key="1">
    <citation type="journal article" date="1998" name="J. Biol. Chem.">
        <title>Novel recognition motif on fibroblast growth factor receptor mediates direct association and activation of SNT adapter proteins.</title>
        <authorList>
            <person name="Xu H."/>
            <person name="Lee K.W."/>
            <person name="Goldfarb M.P."/>
        </authorList>
    </citation>
    <scope>NUCLEOTIDE SEQUENCE [MRNA]</scope>
    <scope>INTERACTION WITH FGFR1</scope>
    <scope>MYRISTOYLATION AT GLY-2</scope>
    <scope>PHOSPHORYLATION AT TYROSINE RESIDUES</scope>
    <source>
        <tissue>Placenta</tissue>
    </source>
</reference>
<reference key="2">
    <citation type="journal article" date="2004" name="Nat. Genet.">
        <title>Complete sequencing and characterization of 21,243 full-length human cDNAs.</title>
        <authorList>
            <person name="Ota T."/>
            <person name="Suzuki Y."/>
            <person name="Nishikawa T."/>
            <person name="Otsuki T."/>
            <person name="Sugiyama T."/>
            <person name="Irie R."/>
            <person name="Wakamatsu A."/>
            <person name="Hayashi K."/>
            <person name="Sato H."/>
            <person name="Nagai K."/>
            <person name="Kimura K."/>
            <person name="Makita H."/>
            <person name="Sekine M."/>
            <person name="Obayashi M."/>
            <person name="Nishi T."/>
            <person name="Shibahara T."/>
            <person name="Tanaka T."/>
            <person name="Ishii S."/>
            <person name="Yamamoto J."/>
            <person name="Saito K."/>
            <person name="Kawai Y."/>
            <person name="Isono Y."/>
            <person name="Nakamura Y."/>
            <person name="Nagahari K."/>
            <person name="Murakami K."/>
            <person name="Yasuda T."/>
            <person name="Iwayanagi T."/>
            <person name="Wagatsuma M."/>
            <person name="Shiratori A."/>
            <person name="Sudo H."/>
            <person name="Hosoiri T."/>
            <person name="Kaku Y."/>
            <person name="Kodaira H."/>
            <person name="Kondo H."/>
            <person name="Sugawara M."/>
            <person name="Takahashi M."/>
            <person name="Kanda K."/>
            <person name="Yokoi T."/>
            <person name="Furuya T."/>
            <person name="Kikkawa E."/>
            <person name="Omura Y."/>
            <person name="Abe K."/>
            <person name="Kamihara K."/>
            <person name="Katsuta N."/>
            <person name="Sato K."/>
            <person name="Tanikawa M."/>
            <person name="Yamazaki M."/>
            <person name="Ninomiya K."/>
            <person name="Ishibashi T."/>
            <person name="Yamashita H."/>
            <person name="Murakawa K."/>
            <person name="Fujimori K."/>
            <person name="Tanai H."/>
            <person name="Kimata M."/>
            <person name="Watanabe M."/>
            <person name="Hiraoka S."/>
            <person name="Chiba Y."/>
            <person name="Ishida S."/>
            <person name="Ono Y."/>
            <person name="Takiguchi S."/>
            <person name="Watanabe S."/>
            <person name="Yosida M."/>
            <person name="Hotuta T."/>
            <person name="Kusano J."/>
            <person name="Kanehori K."/>
            <person name="Takahashi-Fujii A."/>
            <person name="Hara H."/>
            <person name="Tanase T.-O."/>
            <person name="Nomura Y."/>
            <person name="Togiya S."/>
            <person name="Komai F."/>
            <person name="Hara R."/>
            <person name="Takeuchi K."/>
            <person name="Arita M."/>
            <person name="Imose N."/>
            <person name="Musashino K."/>
            <person name="Yuuki H."/>
            <person name="Oshima A."/>
            <person name="Sasaki N."/>
            <person name="Aotsuka S."/>
            <person name="Yoshikawa Y."/>
            <person name="Matsunawa H."/>
            <person name="Ichihara T."/>
            <person name="Shiohata N."/>
            <person name="Sano S."/>
            <person name="Moriya S."/>
            <person name="Momiyama H."/>
            <person name="Satoh N."/>
            <person name="Takami S."/>
            <person name="Terashima Y."/>
            <person name="Suzuki O."/>
            <person name="Nakagawa S."/>
            <person name="Senoh A."/>
            <person name="Mizoguchi H."/>
            <person name="Goto Y."/>
            <person name="Shimizu F."/>
            <person name="Wakebe H."/>
            <person name="Hishigaki H."/>
            <person name="Watanabe T."/>
            <person name="Sugiyama A."/>
            <person name="Takemoto M."/>
            <person name="Kawakami B."/>
            <person name="Yamazaki M."/>
            <person name="Watanabe K."/>
            <person name="Kumagai A."/>
            <person name="Itakura S."/>
            <person name="Fukuzumi Y."/>
            <person name="Fujimori Y."/>
            <person name="Komiyama M."/>
            <person name="Tashiro H."/>
            <person name="Tanigami A."/>
            <person name="Fujiwara T."/>
            <person name="Ono T."/>
            <person name="Yamada K."/>
            <person name="Fujii Y."/>
            <person name="Ozaki K."/>
            <person name="Hirao M."/>
            <person name="Ohmori Y."/>
            <person name="Kawabata A."/>
            <person name="Hikiji T."/>
            <person name="Kobatake N."/>
            <person name="Inagaki H."/>
            <person name="Ikema Y."/>
            <person name="Okamoto S."/>
            <person name="Okitani R."/>
            <person name="Kawakami T."/>
            <person name="Noguchi S."/>
            <person name="Itoh T."/>
            <person name="Shigeta K."/>
            <person name="Senba T."/>
            <person name="Matsumura K."/>
            <person name="Nakajima Y."/>
            <person name="Mizuno T."/>
            <person name="Morinaga M."/>
            <person name="Sasaki M."/>
            <person name="Togashi T."/>
            <person name="Oyama M."/>
            <person name="Hata H."/>
            <person name="Watanabe M."/>
            <person name="Komatsu T."/>
            <person name="Mizushima-Sugano J."/>
            <person name="Satoh T."/>
            <person name="Shirai Y."/>
            <person name="Takahashi Y."/>
            <person name="Nakagawa K."/>
            <person name="Okumura K."/>
            <person name="Nagase T."/>
            <person name="Nomura N."/>
            <person name="Kikuchi H."/>
            <person name="Masuho Y."/>
            <person name="Yamashita R."/>
            <person name="Nakai K."/>
            <person name="Yada T."/>
            <person name="Nakamura Y."/>
            <person name="Ohara O."/>
            <person name="Isogai T."/>
            <person name="Sugano S."/>
        </authorList>
    </citation>
    <scope>NUCLEOTIDE SEQUENCE [LARGE SCALE MRNA]</scope>
    <source>
        <tissue>Hippocampus</tissue>
    </source>
</reference>
<reference key="3">
    <citation type="submission" date="2007-12" db="EMBL/GenBank/DDBJ databases">
        <authorList>
            <consortium name="NHLBI resequencing and genotyping service (RS&amp;G)"/>
        </authorList>
    </citation>
    <scope>NUCLEOTIDE SEQUENCE [GENOMIC DNA]</scope>
</reference>
<reference key="4">
    <citation type="journal article" date="2006" name="Nature">
        <title>The finished DNA sequence of human chromosome 12.</title>
        <authorList>
            <person name="Scherer S.E."/>
            <person name="Muzny D.M."/>
            <person name="Buhay C.J."/>
            <person name="Chen R."/>
            <person name="Cree A."/>
            <person name="Ding Y."/>
            <person name="Dugan-Rocha S."/>
            <person name="Gill R."/>
            <person name="Gunaratne P."/>
            <person name="Harris R.A."/>
            <person name="Hawes A.C."/>
            <person name="Hernandez J."/>
            <person name="Hodgson A.V."/>
            <person name="Hume J."/>
            <person name="Jackson A."/>
            <person name="Khan Z.M."/>
            <person name="Kovar-Smith C."/>
            <person name="Lewis L.R."/>
            <person name="Lozado R.J."/>
            <person name="Metzker M.L."/>
            <person name="Milosavljevic A."/>
            <person name="Miner G.R."/>
            <person name="Montgomery K.T."/>
            <person name="Morgan M.B."/>
            <person name="Nazareth L.V."/>
            <person name="Scott G."/>
            <person name="Sodergren E."/>
            <person name="Song X.-Z."/>
            <person name="Steffen D."/>
            <person name="Lovering R.C."/>
            <person name="Wheeler D.A."/>
            <person name="Worley K.C."/>
            <person name="Yuan Y."/>
            <person name="Zhang Z."/>
            <person name="Adams C.Q."/>
            <person name="Ansari-Lari M.A."/>
            <person name="Ayele M."/>
            <person name="Brown M.J."/>
            <person name="Chen G."/>
            <person name="Chen Z."/>
            <person name="Clerc-Blankenburg K.P."/>
            <person name="Davis C."/>
            <person name="Delgado O."/>
            <person name="Dinh H.H."/>
            <person name="Draper H."/>
            <person name="Gonzalez-Garay M.L."/>
            <person name="Havlak P."/>
            <person name="Jackson L.R."/>
            <person name="Jacob L.S."/>
            <person name="Kelly S.H."/>
            <person name="Li L."/>
            <person name="Li Z."/>
            <person name="Liu J."/>
            <person name="Liu W."/>
            <person name="Lu J."/>
            <person name="Maheshwari M."/>
            <person name="Nguyen B.-V."/>
            <person name="Okwuonu G.O."/>
            <person name="Pasternak S."/>
            <person name="Perez L.M."/>
            <person name="Plopper F.J.H."/>
            <person name="Santibanez J."/>
            <person name="Shen H."/>
            <person name="Tabor P.E."/>
            <person name="Verduzco D."/>
            <person name="Waldron L."/>
            <person name="Wang Q."/>
            <person name="Williams G.A."/>
            <person name="Zhang J."/>
            <person name="Zhou J."/>
            <person name="Allen C.C."/>
            <person name="Amin A.G."/>
            <person name="Anyalebechi V."/>
            <person name="Bailey M."/>
            <person name="Barbaria J.A."/>
            <person name="Bimage K.E."/>
            <person name="Bryant N.P."/>
            <person name="Burch P.E."/>
            <person name="Burkett C.E."/>
            <person name="Burrell K.L."/>
            <person name="Calderon E."/>
            <person name="Cardenas V."/>
            <person name="Carter K."/>
            <person name="Casias K."/>
            <person name="Cavazos I."/>
            <person name="Cavazos S.R."/>
            <person name="Ceasar H."/>
            <person name="Chacko J."/>
            <person name="Chan S.N."/>
            <person name="Chavez D."/>
            <person name="Christopoulos C."/>
            <person name="Chu J."/>
            <person name="Cockrell R."/>
            <person name="Cox C.D."/>
            <person name="Dang M."/>
            <person name="Dathorne S.R."/>
            <person name="David R."/>
            <person name="Davis C.M."/>
            <person name="Davy-Carroll L."/>
            <person name="Deshazo D.R."/>
            <person name="Donlin J.E."/>
            <person name="D'Souza L."/>
            <person name="Eaves K.A."/>
            <person name="Egan A."/>
            <person name="Emery-Cohen A.J."/>
            <person name="Escotto M."/>
            <person name="Flagg N."/>
            <person name="Forbes L.D."/>
            <person name="Gabisi A.M."/>
            <person name="Garza M."/>
            <person name="Hamilton C."/>
            <person name="Henderson N."/>
            <person name="Hernandez O."/>
            <person name="Hines S."/>
            <person name="Hogues M.E."/>
            <person name="Huang M."/>
            <person name="Idlebird D.G."/>
            <person name="Johnson R."/>
            <person name="Jolivet A."/>
            <person name="Jones S."/>
            <person name="Kagan R."/>
            <person name="King L.M."/>
            <person name="Leal B."/>
            <person name="Lebow H."/>
            <person name="Lee S."/>
            <person name="LeVan J.M."/>
            <person name="Lewis L.C."/>
            <person name="London P."/>
            <person name="Lorensuhewa L.M."/>
            <person name="Loulseged H."/>
            <person name="Lovett D.A."/>
            <person name="Lucier A."/>
            <person name="Lucier R.L."/>
            <person name="Ma J."/>
            <person name="Madu R.C."/>
            <person name="Mapua P."/>
            <person name="Martindale A.D."/>
            <person name="Martinez E."/>
            <person name="Massey E."/>
            <person name="Mawhiney S."/>
            <person name="Meador M.G."/>
            <person name="Mendez S."/>
            <person name="Mercado C."/>
            <person name="Mercado I.C."/>
            <person name="Merritt C.E."/>
            <person name="Miner Z.L."/>
            <person name="Minja E."/>
            <person name="Mitchell T."/>
            <person name="Mohabbat F."/>
            <person name="Mohabbat K."/>
            <person name="Montgomery B."/>
            <person name="Moore N."/>
            <person name="Morris S."/>
            <person name="Munidasa M."/>
            <person name="Ngo R.N."/>
            <person name="Nguyen N.B."/>
            <person name="Nickerson E."/>
            <person name="Nwaokelemeh O.O."/>
            <person name="Nwokenkwo S."/>
            <person name="Obregon M."/>
            <person name="Oguh M."/>
            <person name="Oragunye N."/>
            <person name="Oviedo R.J."/>
            <person name="Parish B.J."/>
            <person name="Parker D.N."/>
            <person name="Parrish J."/>
            <person name="Parks K.L."/>
            <person name="Paul H.A."/>
            <person name="Payton B.A."/>
            <person name="Perez A."/>
            <person name="Perrin W."/>
            <person name="Pickens A."/>
            <person name="Primus E.L."/>
            <person name="Pu L.-L."/>
            <person name="Puazo M."/>
            <person name="Quiles M.M."/>
            <person name="Quiroz J.B."/>
            <person name="Rabata D."/>
            <person name="Reeves K."/>
            <person name="Ruiz S.J."/>
            <person name="Shao H."/>
            <person name="Sisson I."/>
            <person name="Sonaike T."/>
            <person name="Sorelle R.P."/>
            <person name="Sutton A.E."/>
            <person name="Svatek A.F."/>
            <person name="Svetz L.A."/>
            <person name="Tamerisa K.S."/>
            <person name="Taylor T.R."/>
            <person name="Teague B."/>
            <person name="Thomas N."/>
            <person name="Thorn R.D."/>
            <person name="Trejos Z.Y."/>
            <person name="Trevino B.K."/>
            <person name="Ukegbu O.N."/>
            <person name="Urban J.B."/>
            <person name="Vasquez L.I."/>
            <person name="Vera V.A."/>
            <person name="Villasana D.M."/>
            <person name="Wang L."/>
            <person name="Ward-Moore S."/>
            <person name="Warren J.T."/>
            <person name="Wei X."/>
            <person name="White F."/>
            <person name="Williamson A.L."/>
            <person name="Wleczyk R."/>
            <person name="Wooden H.S."/>
            <person name="Wooden S.H."/>
            <person name="Yen J."/>
            <person name="Yoon L."/>
            <person name="Yoon V."/>
            <person name="Zorrilla S.E."/>
            <person name="Nelson D."/>
            <person name="Kucherlapati R."/>
            <person name="Weinstock G."/>
            <person name="Gibbs R.A."/>
        </authorList>
    </citation>
    <scope>NUCLEOTIDE SEQUENCE [LARGE SCALE GENOMIC DNA]</scope>
</reference>
<reference key="5">
    <citation type="submission" date="2005-07" db="EMBL/GenBank/DDBJ databases">
        <authorList>
            <person name="Mural R.J."/>
            <person name="Istrail S."/>
            <person name="Sutton G.G."/>
            <person name="Florea L."/>
            <person name="Halpern A.L."/>
            <person name="Mobarry C.M."/>
            <person name="Lippert R."/>
            <person name="Walenz B."/>
            <person name="Shatkay H."/>
            <person name="Dew I."/>
            <person name="Miller J.R."/>
            <person name="Flanigan M.J."/>
            <person name="Edwards N.J."/>
            <person name="Bolanos R."/>
            <person name="Fasulo D."/>
            <person name="Halldorsson B.V."/>
            <person name="Hannenhalli S."/>
            <person name="Turner R."/>
            <person name="Yooseph S."/>
            <person name="Lu F."/>
            <person name="Nusskern D.R."/>
            <person name="Shue B.C."/>
            <person name="Zheng X.H."/>
            <person name="Zhong F."/>
            <person name="Delcher A.L."/>
            <person name="Huson D.H."/>
            <person name="Kravitz S.A."/>
            <person name="Mouchard L."/>
            <person name="Reinert K."/>
            <person name="Remington K.A."/>
            <person name="Clark A.G."/>
            <person name="Waterman M.S."/>
            <person name="Eichler E.E."/>
            <person name="Adams M.D."/>
            <person name="Hunkapiller M.W."/>
            <person name="Myers E.W."/>
            <person name="Venter J.C."/>
        </authorList>
    </citation>
    <scope>NUCLEOTIDE SEQUENCE [LARGE SCALE GENOMIC DNA]</scope>
</reference>
<reference key="6">
    <citation type="journal article" date="2004" name="Genome Res.">
        <title>The status, quality, and expansion of the NIH full-length cDNA project: the Mammalian Gene Collection (MGC).</title>
        <authorList>
            <consortium name="The MGC Project Team"/>
        </authorList>
    </citation>
    <scope>NUCLEOTIDE SEQUENCE [LARGE SCALE MRNA]</scope>
    <source>
        <tissue>Uterus</tissue>
    </source>
</reference>
<reference key="7">
    <citation type="journal article" date="1999" name="J. Biol. Chem.">
        <title>The signaling adapter FRS-2 competes with Shc for binding to the nerve growth factor receptor TrkA. A model for discriminating proliferation and differentiation.</title>
        <authorList>
            <person name="Meakin S.O."/>
            <person name="MacDonald J.I.S."/>
            <person name="Gryz E.A."/>
            <person name="Kubu C.J."/>
            <person name="Verdi J.M."/>
        </authorList>
    </citation>
    <scope>INTERACTION WITH CKS2; GRB2; PTPN11; SRC; NTRK1; NTRK2 AND NTRK3</scope>
    <scope>MYRISTOYLATION AT GLY-2</scope>
    <scope>PHOSPHORYLATION AT TYROSINE RESIDUES</scope>
    <scope>TISSUE SPECIFICITY</scope>
</reference>
<reference key="8">
    <citation type="journal article" date="2003" name="Biol. Chem.">
        <title>EGFR and FGFR signaling through FRS2 is subject to negative feedback control by ERK1/2.</title>
        <authorList>
            <person name="Wu Y."/>
            <person name="Chen Z."/>
            <person name="Ullrich A."/>
        </authorList>
    </citation>
    <scope>PHOSPHORYLATION BY MAPK1/ERK2 AND MAPK3/ERK1</scope>
    <scope>INTERACTION WITH MAPK1/ERK2 AND MAPK3/ERK1</scope>
    <scope>FUNCTION</scope>
</reference>
<reference key="9">
    <citation type="journal article" date="2004" name="Cancer Cell">
        <title>TrkA alternative splicing: a regulated tumor-promoting switch in human neuroblastoma.</title>
        <authorList>
            <person name="Tacconelli A."/>
            <person name="Farina A.R."/>
            <person name="Cappabianca L."/>
            <person name="Desantis G."/>
            <person name="Tessitore A."/>
            <person name="Vetuschi A."/>
            <person name="Sferra R."/>
            <person name="Rucci N."/>
            <person name="Argenti B."/>
            <person name="Screpanti I."/>
            <person name="Gulino A."/>
            <person name="Mackay A.R."/>
        </authorList>
    </citation>
    <scope>INTERACTION WITH NTRK1</scope>
</reference>
<reference key="10">
    <citation type="journal article" date="2007" name="FEBS Lett.">
        <title>ALK activation induces Shc and FRS2 recruitment: Signaling and phenotypic outcomes in PC12 cells differentiation.</title>
        <authorList>
            <person name="Degoutin J."/>
            <person name="Vigny M."/>
            <person name="Gouzi J.Y."/>
        </authorList>
    </citation>
    <scope>INTERACTION WITH ALK</scope>
    <scope>PHOSPHORYLATION</scope>
</reference>
<reference key="11">
    <citation type="journal article" date="2008" name="Proc. Natl. Acad. Sci. U.S.A.">
        <title>A quantitative atlas of mitotic phosphorylation.</title>
        <authorList>
            <person name="Dephoure N."/>
            <person name="Zhou C."/>
            <person name="Villen J."/>
            <person name="Beausoleil S.A."/>
            <person name="Bakalarski C.E."/>
            <person name="Elledge S.J."/>
            <person name="Gygi S.P."/>
        </authorList>
    </citation>
    <scope>PHOSPHORYLATION [LARGE SCALE ANALYSIS] AT SER-221</scope>
    <scope>IDENTIFICATION BY MASS SPECTROMETRY [LARGE SCALE ANALYSIS]</scope>
    <source>
        <tissue>Cervix carcinoma</tissue>
    </source>
</reference>
<reference key="12">
    <citation type="journal article" date="2011" name="EMBO J.">
        <title>Nedd4-1 binds and ubiquitylates activated FGFR1 to control its endocytosis and function.</title>
        <authorList>
            <person name="Persaud A."/>
            <person name="Alberts P."/>
            <person name="Hayes M."/>
            <person name="Guettler S."/>
            <person name="Clarke I."/>
            <person name="Sicheri F."/>
            <person name="Dirks P."/>
            <person name="Ciruna B."/>
            <person name="Rotin D."/>
        </authorList>
    </citation>
    <scope>FUNCTION IN ACTIVATION OF AKT1; PLCG1; MAPK1/ERK2</scope>
    <scope>MAPK3/ERK1 AND MAP KINASE SIGNALING</scope>
    <scope>INTERACTION WITH FGFR1</scope>
    <scope>PHOSPHORYLATION</scope>
</reference>
<reference key="13">
    <citation type="journal article" date="2008" name="Cancer Sci.">
        <title>Regulation of growth factor signaling by FRS2 family docking/scaffold adaptor proteins.</title>
        <authorList>
            <person name="Gotoh N."/>
        </authorList>
    </citation>
    <scope>REVIEW ON FUNCTION; SUBUNIT AND PHOSPHORYLATION</scope>
</reference>
<reference key="14">
    <citation type="journal article" date="2010" name="Nat. Rev. Cancer">
        <title>Fibroblast growth factor signalling: from development to cancer.</title>
        <authorList>
            <person name="Turner N."/>
            <person name="Grose R."/>
        </authorList>
    </citation>
    <scope>REVIEW ON FUNCTION IN FGF SIGNALING</scope>
</reference>
<reference key="15">
    <citation type="journal article" date="2013" name="J. Proteome Res.">
        <title>Toward a comprehensive characterization of a human cancer cell phosphoproteome.</title>
        <authorList>
            <person name="Zhou H."/>
            <person name="Di Palma S."/>
            <person name="Preisinger C."/>
            <person name="Peng M."/>
            <person name="Polat A.N."/>
            <person name="Heck A.J."/>
            <person name="Mohammed S."/>
        </authorList>
    </citation>
    <scope>PHOSPHORYLATION [LARGE SCALE ANALYSIS] AT SER-211 AND SER-365</scope>
    <scope>IDENTIFICATION BY MASS SPECTROMETRY [LARGE SCALE ANALYSIS]</scope>
    <source>
        <tissue>Cervix carcinoma</tissue>
    </source>
</reference>
<reference key="16">
    <citation type="journal article" date="2014" name="J. Proteomics">
        <title>An enzyme assisted RP-RPLC approach for in-depth analysis of human liver phosphoproteome.</title>
        <authorList>
            <person name="Bian Y."/>
            <person name="Song C."/>
            <person name="Cheng K."/>
            <person name="Dong M."/>
            <person name="Wang F."/>
            <person name="Huang J."/>
            <person name="Sun D."/>
            <person name="Wang L."/>
            <person name="Ye M."/>
            <person name="Zou H."/>
        </authorList>
    </citation>
    <scope>PHOSPHORYLATION [LARGE SCALE ANALYSIS] AT SER-177</scope>
    <scope>IDENTIFICATION BY MASS SPECTROMETRY [LARGE SCALE ANALYSIS]</scope>
    <source>
        <tissue>Liver</tissue>
    </source>
</reference>
<reference key="17">
    <citation type="journal article" date="2000" name="Mol. Cell">
        <title>Structural basis of SNT PTB domain interactions with distinct neurotrophic receptors.</title>
        <authorList>
            <person name="Dhalluin C."/>
            <person name="Yan K.S."/>
            <person name="Plotnikova O."/>
            <person name="Lee K.W."/>
            <person name="Zeng L."/>
            <person name="Kuti M."/>
            <person name="Mujtaba S."/>
            <person name="Goldfarb M.P."/>
            <person name="Zhou M.-M."/>
        </authorList>
    </citation>
    <scope>STRUCTURE BY NMR OF 11-136 IN COMPLEX WITH FGFR1</scope>
</reference>
<dbReference type="EMBL" id="AF036717">
    <property type="protein sequence ID" value="AAB92554.1"/>
    <property type="molecule type" value="mRNA"/>
</dbReference>
<dbReference type="EMBL" id="AK312477">
    <property type="protein sequence ID" value="BAG35381.1"/>
    <property type="status" value="ALT_SEQ"/>
    <property type="molecule type" value="mRNA"/>
</dbReference>
<dbReference type="EMBL" id="EU332842">
    <property type="protein sequence ID" value="ABY87531.1"/>
    <property type="molecule type" value="Genomic_DNA"/>
</dbReference>
<dbReference type="EMBL" id="AC018921">
    <property type="status" value="NOT_ANNOTATED_CDS"/>
    <property type="molecule type" value="Genomic_DNA"/>
</dbReference>
<dbReference type="EMBL" id="CH471054">
    <property type="protein sequence ID" value="EAW97225.1"/>
    <property type="molecule type" value="Genomic_DNA"/>
</dbReference>
<dbReference type="EMBL" id="BC021562">
    <property type="protein sequence ID" value="AAH21562.1"/>
    <property type="status" value="ALT_SEQ"/>
    <property type="molecule type" value="mRNA"/>
</dbReference>
<dbReference type="CCDS" id="CCDS41809.1"/>
<dbReference type="RefSeq" id="NP_001036020.1">
    <property type="nucleotide sequence ID" value="NM_001042555.3"/>
</dbReference>
<dbReference type="RefSeq" id="NP_001265280.1">
    <property type="nucleotide sequence ID" value="NM_001278351.2"/>
</dbReference>
<dbReference type="RefSeq" id="NP_001265282.1">
    <property type="nucleotide sequence ID" value="NM_001278353.2"/>
</dbReference>
<dbReference type="RefSeq" id="NP_001265283.1">
    <property type="nucleotide sequence ID" value="NM_001278354.2"/>
</dbReference>
<dbReference type="RefSeq" id="NP_001265284.1">
    <property type="nucleotide sequence ID" value="NM_001278355.2"/>
</dbReference>
<dbReference type="RefSeq" id="NP_001265285.1">
    <property type="nucleotide sequence ID" value="NM_001278356.2"/>
</dbReference>
<dbReference type="RefSeq" id="NP_001265286.1">
    <property type="nucleotide sequence ID" value="NM_001278357.2"/>
</dbReference>
<dbReference type="RefSeq" id="NP_006645.3">
    <property type="nucleotide sequence ID" value="NM_006654.4"/>
</dbReference>
<dbReference type="RefSeq" id="XP_016874206.1">
    <property type="nucleotide sequence ID" value="XM_017018717.2"/>
</dbReference>
<dbReference type="RefSeq" id="XP_016874207.1">
    <property type="nucleotide sequence ID" value="XM_017018718.2"/>
</dbReference>
<dbReference type="RefSeq" id="XP_016874208.1">
    <property type="nucleotide sequence ID" value="XM_017018719.2"/>
</dbReference>
<dbReference type="RefSeq" id="XP_047284074.1">
    <property type="nucleotide sequence ID" value="XM_047428118.1"/>
</dbReference>
<dbReference type="RefSeq" id="XP_047284075.1">
    <property type="nucleotide sequence ID" value="XM_047428119.1"/>
</dbReference>
<dbReference type="RefSeq" id="XP_047284076.1">
    <property type="nucleotide sequence ID" value="XM_047428120.1"/>
</dbReference>
<dbReference type="RefSeq" id="XP_047284077.1">
    <property type="nucleotide sequence ID" value="XM_047428121.1"/>
</dbReference>
<dbReference type="RefSeq" id="XP_047284078.1">
    <property type="nucleotide sequence ID" value="XM_047428122.1"/>
</dbReference>
<dbReference type="RefSeq" id="XP_047284079.1">
    <property type="nucleotide sequence ID" value="XM_047428123.1"/>
</dbReference>
<dbReference type="RefSeq" id="XP_054226799.1">
    <property type="nucleotide sequence ID" value="XM_054370824.1"/>
</dbReference>
<dbReference type="RefSeq" id="XP_054226800.1">
    <property type="nucleotide sequence ID" value="XM_054370825.1"/>
</dbReference>
<dbReference type="RefSeq" id="XP_054226801.1">
    <property type="nucleotide sequence ID" value="XM_054370826.1"/>
</dbReference>
<dbReference type="RefSeq" id="XP_054226802.1">
    <property type="nucleotide sequence ID" value="XM_054370827.1"/>
</dbReference>
<dbReference type="RefSeq" id="XP_054226803.1">
    <property type="nucleotide sequence ID" value="XM_054370828.1"/>
</dbReference>
<dbReference type="RefSeq" id="XP_054226804.1">
    <property type="nucleotide sequence ID" value="XM_054370829.1"/>
</dbReference>
<dbReference type="RefSeq" id="XP_054226805.1">
    <property type="nucleotide sequence ID" value="XM_054370830.1"/>
</dbReference>
<dbReference type="RefSeq" id="XP_054226806.1">
    <property type="nucleotide sequence ID" value="XM_054370831.1"/>
</dbReference>
<dbReference type="RefSeq" id="XP_054226807.1">
    <property type="nucleotide sequence ID" value="XM_054370832.1"/>
</dbReference>
<dbReference type="PDB" id="1XR0">
    <property type="method" value="NMR"/>
    <property type="chains" value="B=11-136"/>
</dbReference>
<dbReference type="PDB" id="2MFQ">
    <property type="method" value="NMR"/>
    <property type="chains" value="A=11-122"/>
</dbReference>
<dbReference type="PDBsum" id="1XR0"/>
<dbReference type="PDBsum" id="2MFQ"/>
<dbReference type="BMRB" id="Q8WU20"/>
<dbReference type="SMR" id="Q8WU20"/>
<dbReference type="BioGRID" id="116031">
    <property type="interactions" value="100"/>
</dbReference>
<dbReference type="ELM" id="Q8WU20"/>
<dbReference type="FunCoup" id="Q8WU20">
    <property type="interactions" value="1991"/>
</dbReference>
<dbReference type="IntAct" id="Q8WU20">
    <property type="interactions" value="25"/>
</dbReference>
<dbReference type="MINT" id="Q8WU20"/>
<dbReference type="STRING" id="9606.ENSP00000447241"/>
<dbReference type="BindingDB" id="Q8WU20"/>
<dbReference type="ChEMBL" id="CHEMBL5291586"/>
<dbReference type="GlyGen" id="Q8WU20">
    <property type="glycosylation" value="3 sites, 1 O-linked glycan (2 sites)"/>
</dbReference>
<dbReference type="iPTMnet" id="Q8WU20"/>
<dbReference type="PhosphoSitePlus" id="Q8WU20"/>
<dbReference type="SwissPalm" id="Q8WU20"/>
<dbReference type="BioMuta" id="FRS2"/>
<dbReference type="DMDM" id="209572769"/>
<dbReference type="jPOST" id="Q8WU20"/>
<dbReference type="MassIVE" id="Q8WU20"/>
<dbReference type="PaxDb" id="9606-ENSP00000447241"/>
<dbReference type="PeptideAtlas" id="Q8WU20"/>
<dbReference type="ProteomicsDB" id="74624"/>
<dbReference type="Pumba" id="Q8WU20"/>
<dbReference type="Antibodypedia" id="4156">
    <property type="antibodies" value="510 antibodies from 39 providers"/>
</dbReference>
<dbReference type="DNASU" id="10818"/>
<dbReference type="Ensembl" id="ENST00000397997.6">
    <property type="protein sequence ID" value="ENSP00000381083.2"/>
    <property type="gene ID" value="ENSG00000166225.9"/>
</dbReference>
<dbReference type="Ensembl" id="ENST00000549921.6">
    <property type="protein sequence ID" value="ENSP00000450048.1"/>
    <property type="gene ID" value="ENSG00000166225.9"/>
</dbReference>
<dbReference type="Ensembl" id="ENST00000550389.5">
    <property type="protein sequence ID" value="ENSP00000447241.1"/>
    <property type="gene ID" value="ENSG00000166225.9"/>
</dbReference>
<dbReference type="GeneID" id="10818"/>
<dbReference type="KEGG" id="hsa:10818"/>
<dbReference type="MANE-Select" id="ENST00000549921.6">
    <property type="protein sequence ID" value="ENSP00000450048.1"/>
    <property type="RefSeq nucleotide sequence ID" value="NM_001278356.2"/>
    <property type="RefSeq protein sequence ID" value="NP_001265285.1"/>
</dbReference>
<dbReference type="UCSC" id="uc009zrj.5">
    <property type="organism name" value="human"/>
</dbReference>
<dbReference type="AGR" id="HGNC:16971"/>
<dbReference type="CTD" id="10818"/>
<dbReference type="DisGeNET" id="10818"/>
<dbReference type="GeneCards" id="FRS2"/>
<dbReference type="HGNC" id="HGNC:16971">
    <property type="gene designation" value="FRS2"/>
</dbReference>
<dbReference type="HPA" id="ENSG00000166225">
    <property type="expression patterns" value="Low tissue specificity"/>
</dbReference>
<dbReference type="MalaCards" id="FRS2"/>
<dbReference type="MIM" id="607743">
    <property type="type" value="gene"/>
</dbReference>
<dbReference type="neXtProt" id="NX_Q8WU20"/>
<dbReference type="OpenTargets" id="ENSG00000166225"/>
<dbReference type="PharmGKB" id="PA134850063"/>
<dbReference type="VEuPathDB" id="HostDB:ENSG00000166225"/>
<dbReference type="eggNOG" id="KOG4047">
    <property type="taxonomic scope" value="Eukaryota"/>
</dbReference>
<dbReference type="GeneTree" id="ENSGT00940000157033"/>
<dbReference type="HOGENOM" id="CLU_022374_0_0_1"/>
<dbReference type="InParanoid" id="Q8WU20"/>
<dbReference type="OMA" id="AHKIDYS"/>
<dbReference type="OrthoDB" id="8817077at2759"/>
<dbReference type="PAN-GO" id="Q8WU20">
    <property type="GO annotations" value="5 GO annotations based on evolutionary models"/>
</dbReference>
<dbReference type="PhylomeDB" id="Q8WU20"/>
<dbReference type="TreeFam" id="TF324994"/>
<dbReference type="PathwayCommons" id="Q8WU20"/>
<dbReference type="Reactome" id="R-HSA-109704">
    <property type="pathway name" value="PI3K Cascade"/>
</dbReference>
<dbReference type="Reactome" id="R-HSA-1257604">
    <property type="pathway name" value="PIP3 activates AKT signaling"/>
</dbReference>
<dbReference type="Reactome" id="R-HSA-170968">
    <property type="pathway name" value="Frs2-mediated activation"/>
</dbReference>
<dbReference type="Reactome" id="R-HSA-201556">
    <property type="pathway name" value="Signaling by ALK"/>
</dbReference>
<dbReference type="Reactome" id="R-HSA-2219530">
    <property type="pathway name" value="Constitutive Signaling by Aberrant PI3K in Cancer"/>
</dbReference>
<dbReference type="Reactome" id="R-HSA-5654689">
    <property type="pathway name" value="PI-3K cascade:FGFR1"/>
</dbReference>
<dbReference type="Reactome" id="R-HSA-5654693">
    <property type="pathway name" value="FRS-mediated FGFR1 signaling"/>
</dbReference>
<dbReference type="Reactome" id="R-HSA-5654695">
    <property type="pathway name" value="PI-3K cascade:FGFR2"/>
</dbReference>
<dbReference type="Reactome" id="R-HSA-5654700">
    <property type="pathway name" value="FRS-mediated FGFR2 signaling"/>
</dbReference>
<dbReference type="Reactome" id="R-HSA-5654706">
    <property type="pathway name" value="FRS-mediated FGFR3 signaling"/>
</dbReference>
<dbReference type="Reactome" id="R-HSA-5654710">
    <property type="pathway name" value="PI-3K cascade:FGFR3"/>
</dbReference>
<dbReference type="Reactome" id="R-HSA-5654712">
    <property type="pathway name" value="FRS-mediated FGFR4 signaling"/>
</dbReference>
<dbReference type="Reactome" id="R-HSA-5654720">
    <property type="pathway name" value="PI-3K cascade:FGFR4"/>
</dbReference>
<dbReference type="Reactome" id="R-HSA-5654726">
    <property type="pathway name" value="Negative regulation of FGFR1 signaling"/>
</dbReference>
<dbReference type="Reactome" id="R-HSA-5654727">
    <property type="pathway name" value="Negative regulation of FGFR2 signaling"/>
</dbReference>
<dbReference type="Reactome" id="R-HSA-5654732">
    <property type="pathway name" value="Negative regulation of FGFR3 signaling"/>
</dbReference>
<dbReference type="Reactome" id="R-HSA-5654733">
    <property type="pathway name" value="Negative regulation of FGFR4 signaling"/>
</dbReference>
<dbReference type="Reactome" id="R-HSA-5655253">
    <property type="pathway name" value="Signaling by FGFR2 in disease"/>
</dbReference>
<dbReference type="Reactome" id="R-HSA-5655291">
    <property type="pathway name" value="Signaling by FGFR4 in disease"/>
</dbReference>
<dbReference type="Reactome" id="R-HSA-5655302">
    <property type="pathway name" value="Signaling by FGFR1 in disease"/>
</dbReference>
<dbReference type="Reactome" id="R-HSA-5655332">
    <property type="pathway name" value="Signaling by FGFR3 in disease"/>
</dbReference>
<dbReference type="Reactome" id="R-HSA-5673001">
    <property type="pathway name" value="RAF/MAP kinase cascade"/>
</dbReference>
<dbReference type="Reactome" id="R-HSA-6811558">
    <property type="pathway name" value="PI5P, PP2A and IER3 Regulate PI3K/AKT Signaling"/>
</dbReference>
<dbReference type="Reactome" id="R-HSA-8853659">
    <property type="pathway name" value="RET signaling"/>
</dbReference>
<dbReference type="Reactome" id="R-HSA-9028731">
    <property type="pathway name" value="Activated NTRK2 signals through FRS2 and FRS3"/>
</dbReference>
<dbReference type="Reactome" id="R-HSA-9696270">
    <property type="pathway name" value="RND2 GTPase cycle"/>
</dbReference>
<dbReference type="Reactome" id="R-HSA-9696273">
    <property type="pathway name" value="RND1 GTPase cycle"/>
</dbReference>
<dbReference type="Reactome" id="R-HSA-9725370">
    <property type="pathway name" value="Signaling by ALK fusions and activated point mutants"/>
</dbReference>
<dbReference type="SignaLink" id="Q8WU20"/>
<dbReference type="SIGNOR" id="Q8WU20"/>
<dbReference type="BioGRID-ORCS" id="10818">
    <property type="hits" value="27 hits in 1158 CRISPR screens"/>
</dbReference>
<dbReference type="ChiTaRS" id="FRS2">
    <property type="organism name" value="human"/>
</dbReference>
<dbReference type="EvolutionaryTrace" id="Q8WU20"/>
<dbReference type="GeneWiki" id="FRS2"/>
<dbReference type="GenomeRNAi" id="10818"/>
<dbReference type="Pharos" id="Q8WU20">
    <property type="development level" value="Tbio"/>
</dbReference>
<dbReference type="PRO" id="PR:Q8WU20"/>
<dbReference type="Proteomes" id="UP000005640">
    <property type="component" value="Chromosome 12"/>
</dbReference>
<dbReference type="RNAct" id="Q8WU20">
    <property type="molecule type" value="protein"/>
</dbReference>
<dbReference type="Bgee" id="ENSG00000166225">
    <property type="expression patterns" value="Expressed in calcaneal tendon and 177 other cell types or tissues"/>
</dbReference>
<dbReference type="ExpressionAtlas" id="Q8WU20">
    <property type="expression patterns" value="baseline and differential"/>
</dbReference>
<dbReference type="GO" id="GO:0005912">
    <property type="term" value="C:adherens junction"/>
    <property type="evidence" value="ECO:0000314"/>
    <property type="project" value="BHF-UCL"/>
</dbReference>
<dbReference type="GO" id="GO:0005911">
    <property type="term" value="C:cell-cell junction"/>
    <property type="evidence" value="ECO:0000318"/>
    <property type="project" value="GO_Central"/>
</dbReference>
<dbReference type="GO" id="GO:0005737">
    <property type="term" value="C:cytoplasm"/>
    <property type="evidence" value="ECO:0000318"/>
    <property type="project" value="GO_Central"/>
</dbReference>
<dbReference type="GO" id="GO:0005829">
    <property type="term" value="C:cytosol"/>
    <property type="evidence" value="ECO:0000304"/>
    <property type="project" value="Reactome"/>
</dbReference>
<dbReference type="GO" id="GO:0012505">
    <property type="term" value="C:endomembrane system"/>
    <property type="evidence" value="ECO:0007669"/>
    <property type="project" value="UniProtKB-SubCell"/>
</dbReference>
<dbReference type="GO" id="GO:0016020">
    <property type="term" value="C:membrane"/>
    <property type="evidence" value="ECO:0000304"/>
    <property type="project" value="ProtInc"/>
</dbReference>
<dbReference type="GO" id="GO:0005886">
    <property type="term" value="C:plasma membrane"/>
    <property type="evidence" value="ECO:0000304"/>
    <property type="project" value="UniProtKB"/>
</dbReference>
<dbReference type="GO" id="GO:0005104">
    <property type="term" value="F:fibroblast growth factor receptor binding"/>
    <property type="evidence" value="ECO:0000353"/>
    <property type="project" value="MGI"/>
</dbReference>
<dbReference type="GO" id="GO:0005168">
    <property type="term" value="F:neurotrophin TRKA receptor binding"/>
    <property type="evidence" value="ECO:0000353"/>
    <property type="project" value="UniProtKB"/>
</dbReference>
<dbReference type="GO" id="GO:0019211">
    <property type="term" value="F:phosphatase activator activity"/>
    <property type="evidence" value="ECO:0000304"/>
    <property type="project" value="UniProtKB"/>
</dbReference>
<dbReference type="GO" id="GO:0005068">
    <property type="term" value="F:transmembrane receptor protein tyrosine kinase adaptor activity"/>
    <property type="evidence" value="ECO:0000318"/>
    <property type="project" value="GO_Central"/>
</dbReference>
<dbReference type="GO" id="GO:0008595">
    <property type="term" value="P:anterior/posterior axis specification, embryo"/>
    <property type="evidence" value="ECO:0007669"/>
    <property type="project" value="Ensembl"/>
</dbReference>
<dbReference type="GO" id="GO:0007185">
    <property type="term" value="P:cell surface receptor protein tyrosine phosphatase signaling pathway"/>
    <property type="evidence" value="ECO:0000304"/>
    <property type="project" value="UniProtKB"/>
</dbReference>
<dbReference type="GO" id="GO:0008543">
    <property type="term" value="P:fibroblast growth factor receptor signaling pathway"/>
    <property type="evidence" value="ECO:0000316"/>
    <property type="project" value="MGI"/>
</dbReference>
<dbReference type="GO" id="GO:0030900">
    <property type="term" value="P:forebrain development"/>
    <property type="evidence" value="ECO:0007669"/>
    <property type="project" value="Ensembl"/>
</dbReference>
<dbReference type="GO" id="GO:0007186">
    <property type="term" value="P:G protein-coupled receptor signaling pathway"/>
    <property type="evidence" value="ECO:0000304"/>
    <property type="project" value="UniProtKB"/>
</dbReference>
<dbReference type="GO" id="GO:0001702">
    <property type="term" value="P:gastrulation with mouth forming second"/>
    <property type="evidence" value="ECO:0007669"/>
    <property type="project" value="Ensembl"/>
</dbReference>
<dbReference type="GO" id="GO:0070307">
    <property type="term" value="P:lens fiber cell development"/>
    <property type="evidence" value="ECO:0007669"/>
    <property type="project" value="Ensembl"/>
</dbReference>
<dbReference type="GO" id="GO:0046619">
    <property type="term" value="P:lens placode formation involved in camera-type eye formation"/>
    <property type="evidence" value="ECO:0007669"/>
    <property type="project" value="Ensembl"/>
</dbReference>
<dbReference type="GO" id="GO:2000726">
    <property type="term" value="P:negative regulation of cardiac muscle cell differentiation"/>
    <property type="evidence" value="ECO:0000316"/>
    <property type="project" value="BHF-UCL"/>
</dbReference>
<dbReference type="GO" id="GO:0007405">
    <property type="term" value="P:neuroblast proliferation"/>
    <property type="evidence" value="ECO:0007669"/>
    <property type="project" value="Ensembl"/>
</dbReference>
<dbReference type="GO" id="GO:0001759">
    <property type="term" value="P:organ induction"/>
    <property type="evidence" value="ECO:0007669"/>
    <property type="project" value="Ensembl"/>
</dbReference>
<dbReference type="GO" id="GO:0043410">
    <property type="term" value="P:positive regulation of MAPK cascade"/>
    <property type="evidence" value="ECO:0007669"/>
    <property type="project" value="Ensembl"/>
</dbReference>
<dbReference type="GO" id="GO:0060527">
    <property type="term" value="P:prostate epithelial cord arborization involved in prostate glandular acinus morphogenesis"/>
    <property type="evidence" value="ECO:0007669"/>
    <property type="project" value="Ensembl"/>
</dbReference>
<dbReference type="GO" id="GO:0042981">
    <property type="term" value="P:regulation of apoptotic process"/>
    <property type="evidence" value="ECO:0007669"/>
    <property type="project" value="Ensembl"/>
</dbReference>
<dbReference type="GO" id="GO:0050678">
    <property type="term" value="P:regulation of epithelial cell proliferation"/>
    <property type="evidence" value="ECO:0007669"/>
    <property type="project" value="Ensembl"/>
</dbReference>
<dbReference type="GO" id="GO:0070372">
    <property type="term" value="P:regulation of ERK1 and ERK2 cascade"/>
    <property type="evidence" value="ECO:0007669"/>
    <property type="project" value="Ensembl"/>
</dbReference>
<dbReference type="GO" id="GO:0003281">
    <property type="term" value="P:ventricular septum development"/>
    <property type="evidence" value="ECO:0007669"/>
    <property type="project" value="Ensembl"/>
</dbReference>
<dbReference type="CDD" id="cd01202">
    <property type="entry name" value="PTB_FRS2"/>
    <property type="match status" value="1"/>
</dbReference>
<dbReference type="FunFam" id="2.30.29.30:FF:000169">
    <property type="entry name" value="Fibroblast growth factor receptor substrate 2"/>
    <property type="match status" value="1"/>
</dbReference>
<dbReference type="Gene3D" id="2.30.29.30">
    <property type="entry name" value="Pleckstrin-homology domain (PH domain)/Phosphotyrosine-binding domain (PTB)"/>
    <property type="match status" value="1"/>
</dbReference>
<dbReference type="IDEAL" id="IID00675"/>
<dbReference type="InterPro" id="IPR050996">
    <property type="entry name" value="Docking_Protein_DOK"/>
</dbReference>
<dbReference type="InterPro" id="IPR038742">
    <property type="entry name" value="FRS2_PTB"/>
</dbReference>
<dbReference type="InterPro" id="IPR002404">
    <property type="entry name" value="IRS_PTB"/>
</dbReference>
<dbReference type="InterPro" id="IPR011993">
    <property type="entry name" value="PH-like_dom_sf"/>
</dbReference>
<dbReference type="PANTHER" id="PTHR21258">
    <property type="entry name" value="DOCKING PROTEIN RELATED"/>
    <property type="match status" value="1"/>
</dbReference>
<dbReference type="PANTHER" id="PTHR21258:SF40">
    <property type="entry name" value="FIBROBLAST GROWTH FACTOR RECEPTOR SUBSTRATE 2"/>
    <property type="match status" value="1"/>
</dbReference>
<dbReference type="Pfam" id="PF02174">
    <property type="entry name" value="IRS"/>
    <property type="match status" value="1"/>
</dbReference>
<dbReference type="SMART" id="SM01244">
    <property type="entry name" value="IRS"/>
    <property type="match status" value="1"/>
</dbReference>
<dbReference type="SMART" id="SM00310">
    <property type="entry name" value="PTBI"/>
    <property type="match status" value="1"/>
</dbReference>
<dbReference type="SUPFAM" id="SSF50729">
    <property type="entry name" value="PH domain-like"/>
    <property type="match status" value="1"/>
</dbReference>
<dbReference type="PROSITE" id="PS51064">
    <property type="entry name" value="IRS_PTB"/>
    <property type="match status" value="1"/>
</dbReference>
<sequence>MGSCCSCPDKDTVPDNHRNKFKVINVDDDGNELGSGIMELTDTELILYTRKRDSVKWHYLCLRRYGYDSNLFSFESGRRCQTGQGIFAFKCARAEELFNMLQEIMQNNSINVVEEPVVERNNHQTELEVPRTPRTPTTPGFAAQNLPNGYPRYPSFGDASSHPSSRHPSVGSARLPSVGEESTHPLLVAEEQVHTYVNTTGVQEERKNRTSVHVPLEARVSNAESSTPKEEPSSIEDRDPQILLEPEGVKFVLGPTPVQKQLMEKEKLEQLGRDQVSGSGANNTEWDTGYDSDERRDAPSVNKLVYENINGLSIPSASGVRRGRLTSTSTSDTQNINNSAQRRTALLNYENLPSLPPVWEARKLSRDEDDNLGPKTPSLNGYHNNLDPMHNYVNTENVTVPASAHKIEYSRRRDCTPTVFNFDIRRPSLEHRQLNYIQVDLEGGSDSDNPQTPKTPTTPLPQTPTRRTELYAVIDIERTAAMSNLQKALPRDDGTSRKTRHNSTDLPM</sequence>
<gene>
    <name type="primary">FRS2</name>
</gene>
<feature type="initiator methionine" description="Removed">
    <location>
        <position position="1"/>
    </location>
</feature>
<feature type="chain" id="PRO_0000087344" description="Fibroblast growth factor receptor substrate 2">
    <location>
        <begin position="2"/>
        <end position="508"/>
    </location>
</feature>
<feature type="domain" description="IRS-type PTB" evidence="3">
    <location>
        <begin position="13"/>
        <end position="115"/>
    </location>
</feature>
<feature type="region of interest" description="Disordered" evidence="4">
    <location>
        <begin position="122"/>
        <end position="180"/>
    </location>
</feature>
<feature type="region of interest" description="Disordered" evidence="4">
    <location>
        <begin position="200"/>
        <end position="243"/>
    </location>
</feature>
<feature type="region of interest" description="Disordered" evidence="4">
    <location>
        <begin position="270"/>
        <end position="297"/>
    </location>
</feature>
<feature type="region of interest" description="Disordered" evidence="4">
    <location>
        <begin position="315"/>
        <end position="338"/>
    </location>
</feature>
<feature type="region of interest" description="Disordered" evidence="4">
    <location>
        <begin position="366"/>
        <end position="385"/>
    </location>
</feature>
<feature type="region of interest" description="Disordered" evidence="4">
    <location>
        <begin position="441"/>
        <end position="467"/>
    </location>
</feature>
<feature type="region of interest" description="Disordered" evidence="4">
    <location>
        <begin position="483"/>
        <end position="508"/>
    </location>
</feature>
<feature type="compositionally biased region" description="Basic and acidic residues" evidence="4">
    <location>
        <begin position="122"/>
        <end position="131"/>
    </location>
</feature>
<feature type="compositionally biased region" description="Basic and acidic residues" evidence="4">
    <location>
        <begin position="227"/>
        <end position="240"/>
    </location>
</feature>
<feature type="compositionally biased region" description="Polar residues" evidence="4">
    <location>
        <begin position="276"/>
        <end position="286"/>
    </location>
</feature>
<feature type="compositionally biased region" description="Polar residues" evidence="4">
    <location>
        <begin position="325"/>
        <end position="338"/>
    </location>
</feature>
<feature type="modified residue" description="Phosphoserine" evidence="15">
    <location>
        <position position="177"/>
    </location>
</feature>
<feature type="modified residue" description="Phosphotyrosine; by FGFR1" evidence="2">
    <location>
        <position position="196"/>
    </location>
</feature>
<feature type="modified residue" description="Phosphoserine" evidence="14">
    <location>
        <position position="211"/>
    </location>
</feature>
<feature type="modified residue" description="Phosphoserine" evidence="13">
    <location>
        <position position="221"/>
    </location>
</feature>
<feature type="modified residue" description="Phosphotyrosine; by FGFR1" evidence="2">
    <location>
        <position position="306"/>
    </location>
</feature>
<feature type="modified residue" description="Phosphotyrosine; by FGFR1" evidence="2">
    <location>
        <position position="349"/>
    </location>
</feature>
<feature type="modified residue" description="Phosphoserine" evidence="14">
    <location>
        <position position="365"/>
    </location>
</feature>
<feature type="modified residue" description="Phosphotyrosine; by FGFR1" evidence="2">
    <location>
        <position position="392"/>
    </location>
</feature>
<feature type="modified residue" description="Phosphotyrosine; by FGFR1" evidence="2">
    <location>
        <position position="436"/>
    </location>
</feature>
<feature type="modified residue" description="Phosphotyrosine; by FGFR1" evidence="2">
    <location>
        <position position="471"/>
    </location>
</feature>
<feature type="lipid moiety-binding region" description="N-myristoyl glycine" evidence="5 11">
    <location>
        <position position="2"/>
    </location>
</feature>
<feature type="sequence variant" id="VAR_046966" description="In dbSNP:rs12580717.">
    <original>K</original>
    <variation>N</variation>
    <location>
        <position position="303"/>
    </location>
</feature>
<feature type="sequence variant" id="VAR_046967" description="In dbSNP:rs35232109.">
    <original>N</original>
    <variation>D</variation>
    <location>
        <position position="449"/>
    </location>
</feature>
<feature type="turn" evidence="17">
    <location>
        <begin position="15"/>
        <end position="18"/>
    </location>
</feature>
<feature type="strand" evidence="16">
    <location>
        <begin position="20"/>
        <end position="26"/>
    </location>
</feature>
<feature type="strand" evidence="17">
    <location>
        <begin position="32"/>
        <end position="34"/>
    </location>
</feature>
<feature type="strand" evidence="16">
    <location>
        <begin position="36"/>
        <end position="40"/>
    </location>
</feature>
<feature type="strand" evidence="16">
    <location>
        <begin position="45"/>
        <end position="49"/>
    </location>
</feature>
<feature type="turn" evidence="16">
    <location>
        <begin position="50"/>
        <end position="52"/>
    </location>
</feature>
<feature type="strand" evidence="16">
    <location>
        <begin position="53"/>
        <end position="57"/>
    </location>
</feature>
<feature type="turn" evidence="17">
    <location>
        <begin position="59"/>
        <end position="61"/>
    </location>
</feature>
<feature type="strand" evidence="16">
    <location>
        <begin position="62"/>
        <end position="67"/>
    </location>
</feature>
<feature type="strand" evidence="16">
    <location>
        <begin position="69"/>
        <end position="76"/>
    </location>
</feature>
<feature type="strand" evidence="16">
    <location>
        <begin position="84"/>
        <end position="90"/>
    </location>
</feature>
<feature type="helix" evidence="16">
    <location>
        <begin position="94"/>
        <end position="107"/>
    </location>
</feature>
<evidence type="ECO:0000250" key="1"/>
<evidence type="ECO:0000250" key="2">
    <source>
        <dbReference type="UniProtKB" id="Q8C180"/>
    </source>
</evidence>
<evidence type="ECO:0000255" key="3">
    <source>
        <dbReference type="PROSITE-ProRule" id="PRU00389"/>
    </source>
</evidence>
<evidence type="ECO:0000256" key="4">
    <source>
        <dbReference type="SAM" id="MobiDB-lite"/>
    </source>
</evidence>
<evidence type="ECO:0000269" key="5">
    <source>
    </source>
</evidence>
<evidence type="ECO:0000269" key="6">
    <source>
    </source>
</evidence>
<evidence type="ECO:0000269" key="7">
    <source>
    </source>
</evidence>
<evidence type="ECO:0000269" key="8">
    <source>
    </source>
</evidence>
<evidence type="ECO:0000269" key="9">
    <source>
    </source>
</evidence>
<evidence type="ECO:0000269" key="10">
    <source>
    </source>
</evidence>
<evidence type="ECO:0000269" key="11">
    <source>
    </source>
</evidence>
<evidence type="ECO:0000305" key="12"/>
<evidence type="ECO:0007744" key="13">
    <source>
    </source>
</evidence>
<evidence type="ECO:0007744" key="14">
    <source>
    </source>
</evidence>
<evidence type="ECO:0007744" key="15">
    <source>
    </source>
</evidence>
<evidence type="ECO:0007829" key="16">
    <source>
        <dbReference type="PDB" id="1XR0"/>
    </source>
</evidence>
<evidence type="ECO:0007829" key="17">
    <source>
        <dbReference type="PDB" id="2MFQ"/>
    </source>
</evidence>
<accession>Q8WU20</accession>
<accession>B0LPF2</accession>
<accession>B2R684</accession>
<accession>O43558</accession>
<accession>Q7LDQ6</accession>
<protein>
    <recommendedName>
        <fullName>Fibroblast growth factor receptor substrate 2</fullName>
        <shortName>FGFR substrate 2</shortName>
    </recommendedName>
    <alternativeName>
        <fullName>FGFR-signaling adaptor SNT</fullName>
    </alternativeName>
    <alternativeName>
        <fullName>Suc1-associated neurotrophic factor target 1</fullName>
        <shortName>SNT-1</shortName>
    </alternativeName>
</protein>
<proteinExistence type="evidence at protein level"/>
<name>FRS2_HUMAN</name>
<organism>
    <name type="scientific">Homo sapiens</name>
    <name type="common">Human</name>
    <dbReference type="NCBI Taxonomy" id="9606"/>
    <lineage>
        <taxon>Eukaryota</taxon>
        <taxon>Metazoa</taxon>
        <taxon>Chordata</taxon>
        <taxon>Craniata</taxon>
        <taxon>Vertebrata</taxon>
        <taxon>Euteleostomi</taxon>
        <taxon>Mammalia</taxon>
        <taxon>Eutheria</taxon>
        <taxon>Euarchontoglires</taxon>
        <taxon>Primates</taxon>
        <taxon>Haplorrhini</taxon>
        <taxon>Catarrhini</taxon>
        <taxon>Hominidae</taxon>
        <taxon>Homo</taxon>
    </lineage>
</organism>
<keyword id="KW-0002">3D-structure</keyword>
<keyword id="KW-0449">Lipoprotein</keyword>
<keyword id="KW-0472">Membrane</keyword>
<keyword id="KW-0519">Myristate</keyword>
<keyword id="KW-0597">Phosphoprotein</keyword>
<keyword id="KW-1267">Proteomics identification</keyword>
<keyword id="KW-1185">Reference proteome</keyword>
<keyword id="KW-0832">Ubl conjugation</keyword>